<accession>P63549</accession>
<accession>Q99W57</accession>
<keyword id="KW-0054">Arabinose catabolism</keyword>
<keyword id="KW-0067">ATP-binding</keyword>
<keyword id="KW-0119">Carbohydrate metabolism</keyword>
<keyword id="KW-0418">Kinase</keyword>
<keyword id="KW-0547">Nucleotide-binding</keyword>
<keyword id="KW-0808">Transferase</keyword>
<sequence length="545" mass="60965">MSYSIGIDYGTASGRVFLINTTNGQVVSKFVKPYTHGVIESELNGLKIPHTYALQNSNDYLEIMEEGISYIVRESKIDPVNIVGIGIDFTSSTIIFTDENLNPVHNLKQFKNNPHAYVKLWKHHGAYKEAEKLYQTAIENNNKWLGHYGYNVSSEWMIPKIMEVMNRAPEIMEKTAYIMEAGDWIVNKLTNKNVRSNCGLGFKAFWEEETGFHYDLFDKIDPKLSKVIQDKVSAPVVNIGEVVGKLDDKMAQKLGLSKETMVSPFIIDAHASLLGIGSEKDKEMTMVMGTSTCHLMLNEKQHQVPGISGSVKGAIIPELFAYEAGQSAVGDLFEYVAKQAPKSYVDEAANRNMTVFELMNEKIKHQMPGESGLIALDWHNGNRSVLSDSNLTGCIFGLTLQTKHEDIYRAYLEATAFGTKMIMQQYQDWHMEVEKVFACGGIPKKNAVMMDIYANVLNKKLIVMDSEYAPAIGAAILGAVSGGAHNSINDAVDAMKEPILYEINPEAEKVQRYETLFKAYKALHDIHGYKKANIMKDIQSLRVEG</sequence>
<protein>
    <recommendedName>
        <fullName evidence="1">Ribulokinase</fullName>
        <ecNumber evidence="1">2.7.1.16</ecNumber>
    </recommendedName>
</protein>
<organism>
    <name type="scientific">Staphylococcus aureus (strain Mu50 / ATCC 700699)</name>
    <dbReference type="NCBI Taxonomy" id="158878"/>
    <lineage>
        <taxon>Bacteria</taxon>
        <taxon>Bacillati</taxon>
        <taxon>Bacillota</taxon>
        <taxon>Bacilli</taxon>
        <taxon>Bacillales</taxon>
        <taxon>Staphylococcaceae</taxon>
        <taxon>Staphylococcus</taxon>
    </lineage>
</organism>
<dbReference type="EC" id="2.7.1.16" evidence="1"/>
<dbReference type="EMBL" id="BA000017">
    <property type="protein sequence ID" value="BAB56714.1"/>
    <property type="molecule type" value="Genomic_DNA"/>
</dbReference>
<dbReference type="RefSeq" id="WP_000122354.1">
    <property type="nucleotide sequence ID" value="NC_002758.2"/>
</dbReference>
<dbReference type="SMR" id="P63549"/>
<dbReference type="KEGG" id="sav:SAV0552"/>
<dbReference type="HOGENOM" id="CLU_009281_9_1_9"/>
<dbReference type="PhylomeDB" id="P63549"/>
<dbReference type="UniPathway" id="UPA00145">
    <property type="reaction ID" value="UER00566"/>
</dbReference>
<dbReference type="Proteomes" id="UP000002481">
    <property type="component" value="Chromosome"/>
</dbReference>
<dbReference type="GO" id="GO:0005737">
    <property type="term" value="C:cytoplasm"/>
    <property type="evidence" value="ECO:0007669"/>
    <property type="project" value="TreeGrafter"/>
</dbReference>
<dbReference type="GO" id="GO:0005524">
    <property type="term" value="F:ATP binding"/>
    <property type="evidence" value="ECO:0007669"/>
    <property type="project" value="UniProtKB-KW"/>
</dbReference>
<dbReference type="GO" id="GO:0019150">
    <property type="term" value="F:D-ribulokinase activity"/>
    <property type="evidence" value="ECO:0007669"/>
    <property type="project" value="RHEA"/>
</dbReference>
<dbReference type="GO" id="GO:0008741">
    <property type="term" value="F:ribulokinase activity"/>
    <property type="evidence" value="ECO:0007669"/>
    <property type="project" value="UniProtKB-UniRule"/>
</dbReference>
<dbReference type="GO" id="GO:0019569">
    <property type="term" value="P:L-arabinose catabolic process to xylulose 5-phosphate"/>
    <property type="evidence" value="ECO:0007669"/>
    <property type="project" value="UniProtKB-UniRule"/>
</dbReference>
<dbReference type="CDD" id="cd07781">
    <property type="entry name" value="ASKHA_NBD_FGGY_L-RBK"/>
    <property type="match status" value="1"/>
</dbReference>
<dbReference type="Gene3D" id="1.20.58.2240">
    <property type="match status" value="1"/>
</dbReference>
<dbReference type="Gene3D" id="3.30.420.40">
    <property type="match status" value="1"/>
</dbReference>
<dbReference type="HAMAP" id="MF_00520">
    <property type="entry name" value="Ribulokinase"/>
    <property type="match status" value="1"/>
</dbReference>
<dbReference type="InterPro" id="IPR043129">
    <property type="entry name" value="ATPase_NBD"/>
</dbReference>
<dbReference type="InterPro" id="IPR000577">
    <property type="entry name" value="Carb_kinase_FGGY"/>
</dbReference>
<dbReference type="InterPro" id="IPR018485">
    <property type="entry name" value="FGGY_C"/>
</dbReference>
<dbReference type="InterPro" id="IPR018484">
    <property type="entry name" value="FGGY_N"/>
</dbReference>
<dbReference type="InterPro" id="IPR005929">
    <property type="entry name" value="Ribulokinase"/>
</dbReference>
<dbReference type="NCBIfam" id="NF003154">
    <property type="entry name" value="PRK04123.1"/>
    <property type="match status" value="1"/>
</dbReference>
<dbReference type="PANTHER" id="PTHR43435:SF4">
    <property type="entry name" value="FGGY CARBOHYDRATE KINASE DOMAIN-CONTAINING PROTEIN"/>
    <property type="match status" value="1"/>
</dbReference>
<dbReference type="PANTHER" id="PTHR43435">
    <property type="entry name" value="RIBULOKINASE"/>
    <property type="match status" value="1"/>
</dbReference>
<dbReference type="Pfam" id="PF02782">
    <property type="entry name" value="FGGY_C"/>
    <property type="match status" value="1"/>
</dbReference>
<dbReference type="Pfam" id="PF00370">
    <property type="entry name" value="FGGY_N"/>
    <property type="match status" value="1"/>
</dbReference>
<dbReference type="PIRSF" id="PIRSF000538">
    <property type="entry name" value="GlpK"/>
    <property type="match status" value="1"/>
</dbReference>
<dbReference type="SUPFAM" id="SSF53067">
    <property type="entry name" value="Actin-like ATPase domain"/>
    <property type="match status" value="2"/>
</dbReference>
<reference key="1">
    <citation type="journal article" date="2001" name="Lancet">
        <title>Whole genome sequencing of meticillin-resistant Staphylococcus aureus.</title>
        <authorList>
            <person name="Kuroda M."/>
            <person name="Ohta T."/>
            <person name="Uchiyama I."/>
            <person name="Baba T."/>
            <person name="Yuzawa H."/>
            <person name="Kobayashi I."/>
            <person name="Cui L."/>
            <person name="Oguchi A."/>
            <person name="Aoki K."/>
            <person name="Nagai Y."/>
            <person name="Lian J.-Q."/>
            <person name="Ito T."/>
            <person name="Kanamori M."/>
            <person name="Matsumaru H."/>
            <person name="Maruyama A."/>
            <person name="Murakami H."/>
            <person name="Hosoyama A."/>
            <person name="Mizutani-Ui Y."/>
            <person name="Takahashi N.K."/>
            <person name="Sawano T."/>
            <person name="Inoue R."/>
            <person name="Kaito C."/>
            <person name="Sekimizu K."/>
            <person name="Hirakawa H."/>
            <person name="Kuhara S."/>
            <person name="Goto S."/>
            <person name="Yabuzaki J."/>
            <person name="Kanehisa M."/>
            <person name="Yamashita A."/>
            <person name="Oshima K."/>
            <person name="Furuya K."/>
            <person name="Yoshino C."/>
            <person name="Shiba T."/>
            <person name="Hattori M."/>
            <person name="Ogasawara N."/>
            <person name="Hayashi H."/>
            <person name="Hiramatsu K."/>
        </authorList>
    </citation>
    <scope>NUCLEOTIDE SEQUENCE [LARGE SCALE GENOMIC DNA]</scope>
    <source>
        <strain>Mu50 / ATCC 700699</strain>
    </source>
</reference>
<feature type="chain" id="PRO_0000198367" description="Ribulokinase">
    <location>
        <begin position="1"/>
        <end position="545"/>
    </location>
</feature>
<evidence type="ECO:0000255" key="1">
    <source>
        <dbReference type="HAMAP-Rule" id="MF_00520"/>
    </source>
</evidence>
<proteinExistence type="inferred from homology"/>
<gene>
    <name evidence="1" type="primary">araB</name>
    <name type="ordered locus">SAV0552</name>
</gene>
<name>ARAB_STAAM</name>
<comment type="catalytic activity">
    <reaction evidence="1">
        <text>D-ribulose + ATP = D-ribulose 5-phosphate + ADP + H(+)</text>
        <dbReference type="Rhea" id="RHEA:17601"/>
        <dbReference type="ChEBI" id="CHEBI:15378"/>
        <dbReference type="ChEBI" id="CHEBI:17173"/>
        <dbReference type="ChEBI" id="CHEBI:30616"/>
        <dbReference type="ChEBI" id="CHEBI:58121"/>
        <dbReference type="ChEBI" id="CHEBI:456216"/>
        <dbReference type="EC" id="2.7.1.16"/>
    </reaction>
</comment>
<comment type="catalytic activity">
    <reaction evidence="1">
        <text>L-ribulose + ATP = L-ribulose 5-phosphate + ADP + H(+)</text>
        <dbReference type="Rhea" id="RHEA:22072"/>
        <dbReference type="ChEBI" id="CHEBI:15378"/>
        <dbReference type="ChEBI" id="CHEBI:16880"/>
        <dbReference type="ChEBI" id="CHEBI:30616"/>
        <dbReference type="ChEBI" id="CHEBI:58226"/>
        <dbReference type="ChEBI" id="CHEBI:456216"/>
        <dbReference type="EC" id="2.7.1.16"/>
    </reaction>
</comment>
<comment type="pathway">
    <text evidence="1">Carbohydrate degradation; L-arabinose degradation via L-ribulose; D-xylulose 5-phosphate from L-arabinose (bacterial route): step 2/3.</text>
</comment>
<comment type="similarity">
    <text evidence="1">Belongs to the ribulokinase family.</text>
</comment>